<proteinExistence type="inferred from homology"/>
<accession>P58198</accession>
<accession>Q05DY0</accession>
<reference key="1">
    <citation type="journal article" date="1999" name="DNA Res.">
        <title>Complete genome sequence of an aerobic hyper-thermophilic crenarchaeon, Aeropyrum pernix K1.</title>
        <authorList>
            <person name="Kawarabayasi Y."/>
            <person name="Hino Y."/>
            <person name="Horikawa H."/>
            <person name="Yamazaki S."/>
            <person name="Haikawa Y."/>
            <person name="Jin-no K."/>
            <person name="Takahashi M."/>
            <person name="Sekine M."/>
            <person name="Baba S."/>
            <person name="Ankai A."/>
            <person name="Kosugi H."/>
            <person name="Hosoyama A."/>
            <person name="Fukui S."/>
            <person name="Nagai Y."/>
            <person name="Nishijima K."/>
            <person name="Nakazawa H."/>
            <person name="Takamiya M."/>
            <person name="Masuda S."/>
            <person name="Funahashi T."/>
            <person name="Tanaka T."/>
            <person name="Kudoh Y."/>
            <person name="Yamazaki J."/>
            <person name="Kushida N."/>
            <person name="Oguchi A."/>
            <person name="Aoki K."/>
            <person name="Kubota K."/>
            <person name="Nakamura Y."/>
            <person name="Nomura N."/>
            <person name="Sako Y."/>
            <person name="Kikuchi H."/>
        </authorList>
    </citation>
    <scope>NUCLEOTIDE SEQUENCE [LARGE SCALE GENOMIC DNA]</scope>
    <source>
        <strain>ATCC 700893 / DSM 11879 / JCM 9820 / NBRC 100138 / K1</strain>
    </source>
</reference>
<keyword id="KW-1003">Cell membrane</keyword>
<keyword id="KW-0472">Membrane</keyword>
<keyword id="KW-0653">Protein transport</keyword>
<keyword id="KW-1185">Reference proteome</keyword>
<keyword id="KW-0811">Translocation</keyword>
<keyword id="KW-0812">Transmembrane</keyword>
<keyword id="KW-1133">Transmembrane helix</keyword>
<keyword id="KW-0813">Transport</keyword>
<protein>
    <recommendedName>
        <fullName evidence="1">Protein translocase subunit SecE</fullName>
    </recommendedName>
    <alternativeName>
        <fullName evidence="1">Protein transport protein Sec61 gamma subunit homolog</fullName>
    </alternativeName>
</protein>
<feature type="chain" id="PRO_0000104213" description="Protein translocase subunit SecE">
    <location>
        <begin position="1"/>
        <end position="60"/>
    </location>
</feature>
<feature type="transmembrane region" description="Helical" evidence="1">
    <location>
        <begin position="37"/>
        <end position="57"/>
    </location>
</feature>
<organism>
    <name type="scientific">Aeropyrum pernix (strain ATCC 700893 / DSM 11879 / JCM 9820 / NBRC 100138 / K1)</name>
    <dbReference type="NCBI Taxonomy" id="272557"/>
    <lineage>
        <taxon>Archaea</taxon>
        <taxon>Thermoproteota</taxon>
        <taxon>Thermoprotei</taxon>
        <taxon>Desulfurococcales</taxon>
        <taxon>Desulfurococcaceae</taxon>
        <taxon>Aeropyrum</taxon>
    </lineage>
</organism>
<name>SECE_AERPE</name>
<comment type="function">
    <text evidence="1">Essential subunit of the Sec protein translocation channel SecYEG. Clamps together the 2 halves of SecY. May contact the channel plug during translocation.</text>
</comment>
<comment type="subunit">
    <text evidence="1">Component of the Sec protein translocase complex. Heterotrimer consisting of SecY (alpha), SecG (beta) and SecE (gamma) subunits. The heterotrimers can form oligomers, although 1 heterotrimer is thought to be able to translocate proteins. Interacts with the ribosome. May interact with SecDF, and other proteins may be involved.</text>
</comment>
<comment type="subcellular location">
    <subcellularLocation>
        <location evidence="1">Cell membrane</location>
        <topology evidence="1">Single-pass membrane protein</topology>
    </subcellularLocation>
</comment>
<comment type="similarity">
    <text evidence="1">Belongs to the SecE/SEC61-gamma family.</text>
</comment>
<sequence>MGIVDIAREYIVAWRRILTLARKPDEEEYSLLLKLNLLGFALVGGIGYLIHLGYIILTSG</sequence>
<dbReference type="EMBL" id="BA000002">
    <property type="protein sequence ID" value="BAF34821.1"/>
    <property type="molecule type" value="Genomic_DNA"/>
</dbReference>
<dbReference type="RefSeq" id="WP_010866845.1">
    <property type="nucleotide sequence ID" value="NC_000854.2"/>
</dbReference>
<dbReference type="SMR" id="P58198"/>
<dbReference type="STRING" id="272557.APE_2176a"/>
<dbReference type="EnsemblBacteria" id="BAF34821">
    <property type="protein sequence ID" value="BAF34821"/>
    <property type="gene ID" value="APE_2176a"/>
</dbReference>
<dbReference type="GeneID" id="1445570"/>
<dbReference type="KEGG" id="ape:APE_2176a"/>
<dbReference type="eggNOG" id="arCOG02204">
    <property type="taxonomic scope" value="Archaea"/>
</dbReference>
<dbReference type="Proteomes" id="UP000002518">
    <property type="component" value="Chromosome"/>
</dbReference>
<dbReference type="GO" id="GO:0005886">
    <property type="term" value="C:plasma membrane"/>
    <property type="evidence" value="ECO:0007669"/>
    <property type="project" value="UniProtKB-SubCell"/>
</dbReference>
<dbReference type="GO" id="GO:0008320">
    <property type="term" value="F:protein transmembrane transporter activity"/>
    <property type="evidence" value="ECO:0007669"/>
    <property type="project" value="UniProtKB-UniRule"/>
</dbReference>
<dbReference type="GO" id="GO:0065002">
    <property type="term" value="P:intracellular protein transmembrane transport"/>
    <property type="evidence" value="ECO:0007669"/>
    <property type="project" value="UniProtKB-UniRule"/>
</dbReference>
<dbReference type="GO" id="GO:0009306">
    <property type="term" value="P:protein secretion"/>
    <property type="evidence" value="ECO:0007669"/>
    <property type="project" value="UniProtKB-UniRule"/>
</dbReference>
<dbReference type="GO" id="GO:0006605">
    <property type="term" value="P:protein targeting"/>
    <property type="evidence" value="ECO:0007669"/>
    <property type="project" value="UniProtKB-UniRule"/>
</dbReference>
<dbReference type="Gene3D" id="1.20.5.820">
    <property type="entry name" value="Preprotein translocase SecE subunit"/>
    <property type="match status" value="1"/>
</dbReference>
<dbReference type="HAMAP" id="MF_00422">
    <property type="entry name" value="SecE"/>
    <property type="match status" value="1"/>
</dbReference>
<dbReference type="InterPro" id="IPR023391">
    <property type="entry name" value="Prot_translocase_SecE_dom_sf"/>
</dbReference>
<dbReference type="InterPro" id="IPR008158">
    <property type="entry name" value="Translocase_Sec61-g"/>
</dbReference>
<dbReference type="InterPro" id="IPR001901">
    <property type="entry name" value="Translocase_SecE/Sec61-g"/>
</dbReference>
<dbReference type="NCBIfam" id="TIGR00327">
    <property type="entry name" value="secE_euk_arch"/>
    <property type="match status" value="1"/>
</dbReference>
<dbReference type="SUPFAM" id="SSF103456">
    <property type="entry name" value="Preprotein translocase SecE subunit"/>
    <property type="match status" value="1"/>
</dbReference>
<gene>
    <name evidence="1" type="primary">secE</name>
    <name type="ordered locus">APE_2176a</name>
</gene>
<evidence type="ECO:0000255" key="1">
    <source>
        <dbReference type="HAMAP-Rule" id="MF_00422"/>
    </source>
</evidence>